<sequence>MPLGSEERRLLRLIAFLNKNNPYPPVEGTARQRRRARRRWRQAQEQLRALAERIWHSRVEEQLVQAIDQLVLDQQHLAIQQLPDPPSSS</sequence>
<gene>
    <name type="primary">rev</name>
</gene>
<feature type="chain" id="PRO_0000085292" description="Protein Rev">
    <location>
        <begin position="1"/>
        <end position="89"/>
    </location>
</feature>
<feature type="region of interest" description="Homomultimerization" evidence="1">
    <location>
        <begin position="13"/>
        <end position="21"/>
    </location>
</feature>
<feature type="short sequence motif" description="Nuclear localization signal and RNA-binding (RRE)" evidence="1">
    <location>
        <begin position="29"/>
        <end position="45"/>
    </location>
</feature>
<feature type="short sequence motif" description="Nuclear export signal" evidence="1">
    <location>
        <begin position="70"/>
        <end position="82"/>
    </location>
</feature>
<organismHost>
    <name type="scientific">Cercopithecidae</name>
    <name type="common">Old World monkeys</name>
    <dbReference type="NCBI Taxonomy" id="9527"/>
</organismHost>
<accession>P27981</accession>
<dbReference type="EMBL" id="M30931">
    <property type="protein sequence ID" value="AAA91918.1"/>
    <property type="molecule type" value="Genomic_RNA"/>
</dbReference>
<dbReference type="PIR" id="B46356">
    <property type="entry name" value="B46356"/>
</dbReference>
<dbReference type="SMR" id="P27981"/>
<dbReference type="GO" id="GO:0030430">
    <property type="term" value="C:host cell cytoplasm"/>
    <property type="evidence" value="ECO:0007669"/>
    <property type="project" value="UniProtKB-SubCell"/>
</dbReference>
<dbReference type="GO" id="GO:0044196">
    <property type="term" value="C:host cell nucleolus"/>
    <property type="evidence" value="ECO:0007669"/>
    <property type="project" value="UniProtKB-SubCell"/>
</dbReference>
<dbReference type="GO" id="GO:0003700">
    <property type="term" value="F:DNA-binding transcription factor activity"/>
    <property type="evidence" value="ECO:0007669"/>
    <property type="project" value="InterPro"/>
</dbReference>
<dbReference type="GO" id="GO:0003723">
    <property type="term" value="F:RNA binding"/>
    <property type="evidence" value="ECO:0007669"/>
    <property type="project" value="UniProtKB-KW"/>
</dbReference>
<dbReference type="GO" id="GO:0051028">
    <property type="term" value="P:mRNA transport"/>
    <property type="evidence" value="ECO:0007669"/>
    <property type="project" value="UniProtKB-KW"/>
</dbReference>
<dbReference type="Gene3D" id="6.10.140.630">
    <property type="match status" value="1"/>
</dbReference>
<dbReference type="InterPro" id="IPR000625">
    <property type="entry name" value="REV_protein"/>
</dbReference>
<dbReference type="Pfam" id="PF00424">
    <property type="entry name" value="REV"/>
    <property type="match status" value="1"/>
</dbReference>
<protein>
    <recommendedName>
        <fullName>Protein Rev</fullName>
    </recommendedName>
    <alternativeName>
        <fullName>Regulator of expression of viral proteins</fullName>
    </alternativeName>
</protein>
<comment type="function">
    <text evidence="1">Escorts unspliced or incompletely spliced viral pre-mRNAs (late transcripts) out of the nucleus of infected cells. These pre-mRNAs carry a recognition sequence called Rev responsive element (RRE) located in the env gene, that is not present in fully spliced viral mRNAs (early transcripts). This function is essential since most viral proteins are translated from unspliced or partially spliced pre-mRNAs which cannot exit the nucleus by the pathway used by fully processed cellular mRNAs (By similarity).</text>
</comment>
<comment type="subunit">
    <text evidence="1">Homomultimer; when bound to the RRE. Multimeric assembly is essential for activity (By similarity).</text>
</comment>
<comment type="subcellular location">
    <subcellularLocation>
        <location>Host nucleus</location>
        <location>Host nucleolus</location>
    </subcellularLocation>
    <subcellularLocation>
        <location>Host cytoplasm</location>
    </subcellularLocation>
    <text evidence="1">The presence of both nuclear import and nuclear export signals leads to continuous shuttling between the nucleus and cytoplasm.</text>
</comment>
<comment type="domain">
    <text evidence="1">The RNA-binding motif binds to the RRE, a stem-and-loop structure present in incompletely spliced viral pre-mRNAs. This region also contains the NLS which mediates nuclear localization. These overlapping functions prevent Rev bound to RRE from undesirable return to the nucleus. When Rev binds the RRE, the NLS becomes masked while the NES remains accessible (By similarity).</text>
</comment>
<evidence type="ECO:0000250" key="1"/>
<keyword id="KW-1035">Host cytoplasm</keyword>
<keyword id="KW-1048">Host nucleus</keyword>
<keyword id="KW-0509">mRNA transport</keyword>
<keyword id="KW-0694">RNA-binding</keyword>
<keyword id="KW-0813">Transport</keyword>
<proteinExistence type="inferred from homology"/>
<name>REV_SIVVG</name>
<organism>
    <name type="scientific">Simian immunodeficiency virus agm.vervet (isolate AGM3)</name>
    <name type="common">SIV-agm.ver</name>
    <name type="synonym">Simian immunodeficiency virus African green monkey vervet</name>
    <dbReference type="NCBI Taxonomy" id="11730"/>
    <lineage>
        <taxon>Viruses</taxon>
        <taxon>Riboviria</taxon>
        <taxon>Pararnavirae</taxon>
        <taxon>Artverviricota</taxon>
        <taxon>Revtraviricetes</taxon>
        <taxon>Ortervirales</taxon>
        <taxon>Retroviridae</taxon>
        <taxon>Orthoretrovirinae</taxon>
        <taxon>Lentivirus</taxon>
        <taxon>Simian immunodeficiency virus</taxon>
    </lineage>
</organism>
<reference key="1">
    <citation type="journal article" date="1990" name="Virology">
        <title>Complete nucleotide sequence of a simian immunodeficiency virus from African green monkeys: a novel type of intragroup divergence.</title>
        <authorList>
            <person name="Baier M."/>
            <person name="Garber C."/>
            <person name="Mueller C."/>
            <person name="Cichutek K."/>
            <person name="Kurth R."/>
        </authorList>
    </citation>
    <scope>NUCLEOTIDE SEQUENCE [GENOMIC RNA]</scope>
</reference>